<gene>
    <name type="primary">faeB-1</name>
    <name type="ORF">AFUA_6G00450</name>
</gene>
<name>FAEB1_ASPFU</name>
<sequence>MMWWFLLIGLASAAATASSASSASFESRCQHFHKEIHLQNVHVLSTTYVPIGSNIPMVYNPPICGGTASSSISTIQFCQVALNVTTSDKSQFFMEAWLPSNYTGRFLSTGNGGLNGCVSYADMVYATQYGFATIGTNNGHFGDTGQYFLNNPEVIEDFAYRALHTGTVVGKALTKLFYPQGYKNSYYLGCSTGGRQGWKSIQRFPDDFDGVVAGAPAINFVNLCSWGSRFLKITGPPGSETFVTSAQWSAVHNEILRQCDALDGAVDGIIEDTDLCQPVFETLLCNSTAVDKTSCLTGVQANTVNEVFSAMYGLDGKWLYPRMQPGSELAASFIYYSGNGFKYSDDWYKYVVYNDSNWGHSTWTLADAAAAAAQDPFQISSFDGNISGFQKAGGKVLHYHGLEDAIITSDSSKAYYKHVADTMGLSPSELDHFYRLFPISGMGHCSPGTGAASIGQGSSTYAGDDPQDNVLMAIVQWVEKGIAPEYVRGSKMSRDGTIDYRRKHCKYPKRNRYVGPGKYTDENAWKCV</sequence>
<protein>
    <recommendedName>
        <fullName>Probable feruloyl esterase B-1</fullName>
        <ecNumber evidence="3">3.1.1.73</ecNumber>
    </recommendedName>
    <alternativeName>
        <fullName>Ferulic acid esterase B-1</fullName>
        <shortName>FAEB-1</shortName>
    </alternativeName>
</protein>
<dbReference type="EC" id="3.1.1.73" evidence="3"/>
<dbReference type="EMBL" id="AAHF01000018">
    <property type="protein sequence ID" value="EAL84220.1"/>
    <property type="molecule type" value="Genomic_DNA"/>
</dbReference>
<dbReference type="RefSeq" id="XP_731510.1">
    <property type="nucleotide sequence ID" value="XM_726417.1"/>
</dbReference>
<dbReference type="SMR" id="Q4W8Z9"/>
<dbReference type="STRING" id="330879.Q4W8Z9"/>
<dbReference type="ESTHER" id="aspfu-faeb1">
    <property type="family name" value="Tannase"/>
</dbReference>
<dbReference type="GlyCosmos" id="Q4W8Z9">
    <property type="glycosylation" value="5 sites, No reported glycans"/>
</dbReference>
<dbReference type="EnsemblFungi" id="EAL84220">
    <property type="protein sequence ID" value="EAL84220"/>
    <property type="gene ID" value="AFUA_6G00450"/>
</dbReference>
<dbReference type="GeneID" id="3503636"/>
<dbReference type="KEGG" id="afm:AFUA_6G00450"/>
<dbReference type="VEuPathDB" id="FungiDB:Afu6g00450"/>
<dbReference type="eggNOG" id="ENOG502QPXZ">
    <property type="taxonomic scope" value="Eukaryota"/>
</dbReference>
<dbReference type="HOGENOM" id="CLU_014819_1_0_1"/>
<dbReference type="InParanoid" id="Q4W8Z9"/>
<dbReference type="OMA" id="FMEAWLP"/>
<dbReference type="OrthoDB" id="3039123at2759"/>
<dbReference type="Proteomes" id="UP000002530">
    <property type="component" value="Chromosome 6"/>
</dbReference>
<dbReference type="GO" id="GO:0005576">
    <property type="term" value="C:extracellular region"/>
    <property type="evidence" value="ECO:0007669"/>
    <property type="project" value="UniProtKB-SubCell"/>
</dbReference>
<dbReference type="GO" id="GO:0052689">
    <property type="term" value="F:carboxylic ester hydrolase activity"/>
    <property type="evidence" value="ECO:0000318"/>
    <property type="project" value="GO_Central"/>
</dbReference>
<dbReference type="GO" id="GO:0030600">
    <property type="term" value="F:feruloyl esterase activity"/>
    <property type="evidence" value="ECO:0007669"/>
    <property type="project" value="UniProtKB-EC"/>
</dbReference>
<dbReference type="GO" id="GO:0046872">
    <property type="term" value="F:metal ion binding"/>
    <property type="evidence" value="ECO:0007669"/>
    <property type="project" value="UniProtKB-KW"/>
</dbReference>
<dbReference type="GO" id="GO:0045493">
    <property type="term" value="P:xylan catabolic process"/>
    <property type="evidence" value="ECO:0007669"/>
    <property type="project" value="UniProtKB-KW"/>
</dbReference>
<dbReference type="Gene3D" id="3.40.50.1820">
    <property type="entry name" value="alpha/beta hydrolase"/>
    <property type="match status" value="1"/>
</dbReference>
<dbReference type="InterPro" id="IPR029058">
    <property type="entry name" value="AB_hydrolase_fold"/>
</dbReference>
<dbReference type="InterPro" id="IPR011118">
    <property type="entry name" value="Tannase/feruloyl_esterase"/>
</dbReference>
<dbReference type="PANTHER" id="PTHR33938">
    <property type="entry name" value="FERULOYL ESTERASE B-RELATED"/>
    <property type="match status" value="1"/>
</dbReference>
<dbReference type="PANTHER" id="PTHR33938:SF15">
    <property type="entry name" value="FERULOYL ESTERASE B-RELATED"/>
    <property type="match status" value="1"/>
</dbReference>
<dbReference type="Pfam" id="PF07519">
    <property type="entry name" value="Tannase"/>
    <property type="match status" value="1"/>
</dbReference>
<dbReference type="SUPFAM" id="SSF53474">
    <property type="entry name" value="alpha/beta-Hydrolases"/>
    <property type="match status" value="1"/>
</dbReference>
<feature type="signal peptide" evidence="4">
    <location>
        <begin position="1"/>
        <end position="19"/>
    </location>
</feature>
<feature type="chain" id="PRO_0000394923" description="Probable feruloyl esterase B-1">
    <location>
        <begin position="20"/>
        <end position="528"/>
    </location>
</feature>
<feature type="active site" description="Acyl-ester intermediate" evidence="2">
    <location>
        <position position="191"/>
    </location>
</feature>
<feature type="active site" description="Charge relay system" evidence="2">
    <location>
        <position position="404"/>
    </location>
</feature>
<feature type="active site" description="Charge relay system" evidence="2">
    <location>
        <position position="444"/>
    </location>
</feature>
<feature type="binding site" evidence="2">
    <location>
        <position position="260"/>
    </location>
    <ligand>
        <name>Ca(2+)</name>
        <dbReference type="ChEBI" id="CHEBI:29108"/>
    </ligand>
</feature>
<feature type="binding site" evidence="2">
    <location>
        <position position="263"/>
    </location>
    <ligand>
        <name>Ca(2+)</name>
        <dbReference type="ChEBI" id="CHEBI:29108"/>
    </ligand>
</feature>
<feature type="binding site" evidence="2">
    <location>
        <position position="265"/>
    </location>
    <ligand>
        <name>Ca(2+)</name>
        <dbReference type="ChEBI" id="CHEBI:29108"/>
    </ligand>
</feature>
<feature type="binding site" evidence="2">
    <location>
        <position position="267"/>
    </location>
    <ligand>
        <name>Ca(2+)</name>
        <dbReference type="ChEBI" id="CHEBI:29108"/>
    </ligand>
</feature>
<feature type="binding site" evidence="2">
    <location>
        <position position="269"/>
    </location>
    <ligand>
        <name>Ca(2+)</name>
        <dbReference type="ChEBI" id="CHEBI:29108"/>
    </ligand>
</feature>
<feature type="glycosylation site" description="N-linked (GlcNAc...) asparagine" evidence="4">
    <location>
        <position position="83"/>
    </location>
</feature>
<feature type="glycosylation site" description="N-linked (GlcNAc...) asparagine" evidence="4">
    <location>
        <position position="101"/>
    </location>
</feature>
<feature type="glycosylation site" description="N-linked (GlcNAc...) asparagine" evidence="4">
    <location>
        <position position="286"/>
    </location>
</feature>
<feature type="glycosylation site" description="N-linked (GlcNAc...) asparagine" evidence="4">
    <location>
        <position position="354"/>
    </location>
</feature>
<feature type="glycosylation site" description="N-linked (GlcNAc...) asparagine" evidence="4">
    <location>
        <position position="385"/>
    </location>
</feature>
<feature type="disulfide bond" evidence="2">
    <location>
        <begin position="29"/>
        <end position="78"/>
    </location>
</feature>
<feature type="disulfide bond" evidence="2">
    <location>
        <begin position="64"/>
        <end position="117"/>
    </location>
</feature>
<feature type="disulfide bond" evidence="2">
    <location>
        <begin position="190"/>
        <end position="445"/>
    </location>
</feature>
<feature type="disulfide bond" evidence="2">
    <location>
        <begin position="259"/>
        <end position="276"/>
    </location>
</feature>
<feature type="disulfide bond" evidence="2">
    <location>
        <begin position="285"/>
        <end position="295"/>
    </location>
</feature>
<feature type="disulfide bond" evidence="2">
    <location>
        <begin position="505"/>
        <end position="527"/>
    </location>
</feature>
<proteinExistence type="inferred from homology"/>
<keyword id="KW-0106">Calcium</keyword>
<keyword id="KW-0119">Carbohydrate metabolism</keyword>
<keyword id="KW-1015">Disulfide bond</keyword>
<keyword id="KW-0325">Glycoprotein</keyword>
<keyword id="KW-0378">Hydrolase</keyword>
<keyword id="KW-0479">Metal-binding</keyword>
<keyword id="KW-0624">Polysaccharide degradation</keyword>
<keyword id="KW-1185">Reference proteome</keyword>
<keyword id="KW-0964">Secreted</keyword>
<keyword id="KW-0719">Serine esterase</keyword>
<keyword id="KW-0732">Signal</keyword>
<keyword id="KW-0858">Xylan degradation</keyword>
<organism>
    <name type="scientific">Aspergillus fumigatus (strain ATCC MYA-4609 / CBS 101355 / FGSC A1100 / Af293)</name>
    <name type="common">Neosartorya fumigata</name>
    <dbReference type="NCBI Taxonomy" id="330879"/>
    <lineage>
        <taxon>Eukaryota</taxon>
        <taxon>Fungi</taxon>
        <taxon>Dikarya</taxon>
        <taxon>Ascomycota</taxon>
        <taxon>Pezizomycotina</taxon>
        <taxon>Eurotiomycetes</taxon>
        <taxon>Eurotiomycetidae</taxon>
        <taxon>Eurotiales</taxon>
        <taxon>Aspergillaceae</taxon>
        <taxon>Aspergillus</taxon>
        <taxon>Aspergillus subgen. Fumigati</taxon>
    </lineage>
</organism>
<comment type="function">
    <text evidence="3">Involved in degradation of plant cell walls. Hydrolyzes the feruloyl-arabinose ester bond in arabinoxylans as well as the feruloyl-galactose and feruloyl-arabinose ester bonds in pectin.</text>
</comment>
<comment type="catalytic activity">
    <reaction evidence="3">
        <text>feruloyl-polysaccharide + H2O = ferulate + polysaccharide.</text>
        <dbReference type="EC" id="3.1.1.73"/>
    </reaction>
</comment>
<comment type="subcellular location">
    <subcellularLocation>
        <location evidence="1">Secreted</location>
    </subcellularLocation>
</comment>
<comment type="similarity">
    <text evidence="5">Belongs to the tannase family.</text>
</comment>
<accession>Q4W8Z9</accession>
<reference key="1">
    <citation type="journal article" date="2005" name="Nature">
        <title>Genomic sequence of the pathogenic and allergenic filamentous fungus Aspergillus fumigatus.</title>
        <authorList>
            <person name="Nierman W.C."/>
            <person name="Pain A."/>
            <person name="Anderson M.J."/>
            <person name="Wortman J.R."/>
            <person name="Kim H.S."/>
            <person name="Arroyo J."/>
            <person name="Berriman M."/>
            <person name="Abe K."/>
            <person name="Archer D.B."/>
            <person name="Bermejo C."/>
            <person name="Bennett J.W."/>
            <person name="Bowyer P."/>
            <person name="Chen D."/>
            <person name="Collins M."/>
            <person name="Coulsen R."/>
            <person name="Davies R."/>
            <person name="Dyer P.S."/>
            <person name="Farman M.L."/>
            <person name="Fedorova N."/>
            <person name="Fedorova N.D."/>
            <person name="Feldblyum T.V."/>
            <person name="Fischer R."/>
            <person name="Fosker N."/>
            <person name="Fraser A."/>
            <person name="Garcia J.L."/>
            <person name="Garcia M.J."/>
            <person name="Goble A."/>
            <person name="Goldman G.H."/>
            <person name="Gomi K."/>
            <person name="Griffith-Jones S."/>
            <person name="Gwilliam R."/>
            <person name="Haas B.J."/>
            <person name="Haas H."/>
            <person name="Harris D.E."/>
            <person name="Horiuchi H."/>
            <person name="Huang J."/>
            <person name="Humphray S."/>
            <person name="Jimenez J."/>
            <person name="Keller N."/>
            <person name="Khouri H."/>
            <person name="Kitamoto K."/>
            <person name="Kobayashi T."/>
            <person name="Konzack S."/>
            <person name="Kulkarni R."/>
            <person name="Kumagai T."/>
            <person name="Lafton A."/>
            <person name="Latge J.-P."/>
            <person name="Li W."/>
            <person name="Lord A."/>
            <person name="Lu C."/>
            <person name="Majoros W.H."/>
            <person name="May G.S."/>
            <person name="Miller B.L."/>
            <person name="Mohamoud Y."/>
            <person name="Molina M."/>
            <person name="Monod M."/>
            <person name="Mouyna I."/>
            <person name="Mulligan S."/>
            <person name="Murphy L.D."/>
            <person name="O'Neil S."/>
            <person name="Paulsen I."/>
            <person name="Penalva M.A."/>
            <person name="Pertea M."/>
            <person name="Price C."/>
            <person name="Pritchard B.L."/>
            <person name="Quail M.A."/>
            <person name="Rabbinowitsch E."/>
            <person name="Rawlins N."/>
            <person name="Rajandream M.A."/>
            <person name="Reichard U."/>
            <person name="Renauld H."/>
            <person name="Robson G.D."/>
            <person name="Rodriguez de Cordoba S."/>
            <person name="Rodriguez-Pena J.M."/>
            <person name="Ronning C.M."/>
            <person name="Rutter S."/>
            <person name="Salzberg S.L."/>
            <person name="Sanchez M."/>
            <person name="Sanchez-Ferrero J.C."/>
            <person name="Saunders D."/>
            <person name="Seeger K."/>
            <person name="Squares R."/>
            <person name="Squares S."/>
            <person name="Takeuchi M."/>
            <person name="Tekaia F."/>
            <person name="Turner G."/>
            <person name="Vazquez de Aldana C.R."/>
            <person name="Weidman J."/>
            <person name="White O."/>
            <person name="Woodward J.R."/>
            <person name="Yu J.-H."/>
            <person name="Fraser C.M."/>
            <person name="Galagan J.E."/>
            <person name="Asai K."/>
            <person name="Machida M."/>
            <person name="Hall N."/>
            <person name="Barrell B.G."/>
            <person name="Denning D.W."/>
        </authorList>
    </citation>
    <scope>NUCLEOTIDE SEQUENCE [LARGE SCALE GENOMIC DNA]</scope>
    <source>
        <strain>ATCC MYA-4609 / CBS 101355 / FGSC A1100 / Af293</strain>
    </source>
</reference>
<evidence type="ECO:0000250" key="1"/>
<evidence type="ECO:0000250" key="2">
    <source>
        <dbReference type="UniProtKB" id="Q2UP89"/>
    </source>
</evidence>
<evidence type="ECO:0000250" key="3">
    <source>
        <dbReference type="UniProtKB" id="Q8WZI8"/>
    </source>
</evidence>
<evidence type="ECO:0000255" key="4"/>
<evidence type="ECO:0000305" key="5"/>